<proteinExistence type="inferred from homology"/>
<gene>
    <name evidence="1" type="primary">metG</name>
    <name type="ordered locus">Tcr_1037</name>
</gene>
<keyword id="KW-0030">Aminoacyl-tRNA synthetase</keyword>
<keyword id="KW-0067">ATP-binding</keyword>
<keyword id="KW-0963">Cytoplasm</keyword>
<keyword id="KW-0436">Ligase</keyword>
<keyword id="KW-0479">Metal-binding</keyword>
<keyword id="KW-0547">Nucleotide-binding</keyword>
<keyword id="KW-0648">Protein biosynthesis</keyword>
<keyword id="KW-0694">RNA-binding</keyword>
<keyword id="KW-0820">tRNA-binding</keyword>
<keyword id="KW-0862">Zinc</keyword>
<accession>Q31GU1</accession>
<organism>
    <name type="scientific">Hydrogenovibrio crunogenus (strain DSM 25203 / XCL-2)</name>
    <name type="common">Thiomicrospira crunogena</name>
    <dbReference type="NCBI Taxonomy" id="317025"/>
    <lineage>
        <taxon>Bacteria</taxon>
        <taxon>Pseudomonadati</taxon>
        <taxon>Pseudomonadota</taxon>
        <taxon>Gammaproteobacteria</taxon>
        <taxon>Thiotrichales</taxon>
        <taxon>Piscirickettsiaceae</taxon>
        <taxon>Hydrogenovibrio</taxon>
    </lineage>
</organism>
<evidence type="ECO:0000255" key="1">
    <source>
        <dbReference type="HAMAP-Rule" id="MF_00098"/>
    </source>
</evidence>
<sequence length="680" mass="77202">MSNTRKILITSALPYANGPIHLGHLVEYIQTDIWARFQKMRGHECYYVCADDAHGTPIMLRAQAEGIDPEDLIARISEEHQTDFAGFNINFDFYHSTNSPENKHFASYIYTQLKEQNHISRKTIKQFYDPEKKMFLPDRFIKGTCPKCKTDDQYGDNCEACGATYSPTDLLNPKSAVSGATPIEKETDHLFFELSHFEDMLKEWTHQGHLQTQIANKLDEWFESGLRAWDISRDAPYFGFEIPGEKDKFFYVWLDAPVGYMASFKALCDKTGLDFDEFWKADSTTELYHFIGKDIIYFHALFWPAMLSGAGFRTPNAIFSHGFLTVDGQKMSKSRGTFIMAKTYLDHLNPEYLRYYFAAKLNSRIDDIDLSLEDFAQRVNSDLVGKVVNIASRCAGFVSKKFDGKLSQAWSDSASTLYQSFIDKSETIANLYEQREYAQAMREIMALADKANEYIDETAPWVLAKQEGKEAELYESVSLGINLFRVLITYLAPVIPTTAEKAQAFLQVDTLNWTDINTPLKDHEITKFKALMTRVEIESIEKMTDASKQDMKKMPPMKPEIKEEASNLDPIADEITFDDFAKVDFRIAKIVNAEQVPEADKLIKLTLDIGVGERQVFAGIKSAYKPEDLVGKLTVMVANLKPRKMRFGLSEGMVLAAGPGGKDLFLLNPDDGAQPGMRVK</sequence>
<name>SYM_HYDCU</name>
<feature type="chain" id="PRO_0000331922" description="Methionine--tRNA ligase">
    <location>
        <begin position="1"/>
        <end position="680"/>
    </location>
</feature>
<feature type="domain" description="tRNA-binding" evidence="1">
    <location>
        <begin position="579"/>
        <end position="680"/>
    </location>
</feature>
<feature type="short sequence motif" description="'HIGH' region">
    <location>
        <begin position="14"/>
        <end position="24"/>
    </location>
</feature>
<feature type="short sequence motif" description="'KMSKS' region">
    <location>
        <begin position="330"/>
        <end position="334"/>
    </location>
</feature>
<feature type="binding site" evidence="1">
    <location>
        <position position="145"/>
    </location>
    <ligand>
        <name>Zn(2+)</name>
        <dbReference type="ChEBI" id="CHEBI:29105"/>
    </ligand>
</feature>
<feature type="binding site" evidence="1">
    <location>
        <position position="148"/>
    </location>
    <ligand>
        <name>Zn(2+)</name>
        <dbReference type="ChEBI" id="CHEBI:29105"/>
    </ligand>
</feature>
<feature type="binding site" evidence="1">
    <location>
        <position position="158"/>
    </location>
    <ligand>
        <name>Zn(2+)</name>
        <dbReference type="ChEBI" id="CHEBI:29105"/>
    </ligand>
</feature>
<feature type="binding site" evidence="1">
    <location>
        <position position="161"/>
    </location>
    <ligand>
        <name>Zn(2+)</name>
        <dbReference type="ChEBI" id="CHEBI:29105"/>
    </ligand>
</feature>
<feature type="binding site" evidence="1">
    <location>
        <position position="333"/>
    </location>
    <ligand>
        <name>ATP</name>
        <dbReference type="ChEBI" id="CHEBI:30616"/>
    </ligand>
</feature>
<protein>
    <recommendedName>
        <fullName evidence="1">Methionine--tRNA ligase</fullName>
        <ecNumber evidence="1">6.1.1.10</ecNumber>
    </recommendedName>
    <alternativeName>
        <fullName evidence="1">Methionyl-tRNA synthetase</fullName>
        <shortName evidence="1">MetRS</shortName>
    </alternativeName>
</protein>
<dbReference type="EC" id="6.1.1.10" evidence="1"/>
<dbReference type="EMBL" id="CP000109">
    <property type="protein sequence ID" value="ABB41632.1"/>
    <property type="molecule type" value="Genomic_DNA"/>
</dbReference>
<dbReference type="SMR" id="Q31GU1"/>
<dbReference type="STRING" id="317025.Tcr_1037"/>
<dbReference type="KEGG" id="tcx:Tcr_1037"/>
<dbReference type="eggNOG" id="COG0073">
    <property type="taxonomic scope" value="Bacteria"/>
</dbReference>
<dbReference type="eggNOG" id="COG0143">
    <property type="taxonomic scope" value="Bacteria"/>
</dbReference>
<dbReference type="HOGENOM" id="CLU_009710_7_0_6"/>
<dbReference type="OrthoDB" id="9810191at2"/>
<dbReference type="GO" id="GO:0005829">
    <property type="term" value="C:cytosol"/>
    <property type="evidence" value="ECO:0007669"/>
    <property type="project" value="TreeGrafter"/>
</dbReference>
<dbReference type="GO" id="GO:0005524">
    <property type="term" value="F:ATP binding"/>
    <property type="evidence" value="ECO:0007669"/>
    <property type="project" value="UniProtKB-UniRule"/>
</dbReference>
<dbReference type="GO" id="GO:0046872">
    <property type="term" value="F:metal ion binding"/>
    <property type="evidence" value="ECO:0007669"/>
    <property type="project" value="UniProtKB-KW"/>
</dbReference>
<dbReference type="GO" id="GO:0004825">
    <property type="term" value="F:methionine-tRNA ligase activity"/>
    <property type="evidence" value="ECO:0007669"/>
    <property type="project" value="UniProtKB-UniRule"/>
</dbReference>
<dbReference type="GO" id="GO:0000049">
    <property type="term" value="F:tRNA binding"/>
    <property type="evidence" value="ECO:0007669"/>
    <property type="project" value="UniProtKB-KW"/>
</dbReference>
<dbReference type="GO" id="GO:0006431">
    <property type="term" value="P:methionyl-tRNA aminoacylation"/>
    <property type="evidence" value="ECO:0007669"/>
    <property type="project" value="UniProtKB-UniRule"/>
</dbReference>
<dbReference type="CDD" id="cd07957">
    <property type="entry name" value="Anticodon_Ia_Met"/>
    <property type="match status" value="1"/>
</dbReference>
<dbReference type="CDD" id="cd00814">
    <property type="entry name" value="MetRS_core"/>
    <property type="match status" value="1"/>
</dbReference>
<dbReference type="CDD" id="cd02800">
    <property type="entry name" value="tRNA_bind_EcMetRS_like"/>
    <property type="match status" value="1"/>
</dbReference>
<dbReference type="FunFam" id="1.10.730.10:FF:000005">
    <property type="entry name" value="Methionine--tRNA ligase"/>
    <property type="match status" value="1"/>
</dbReference>
<dbReference type="FunFam" id="2.20.28.20:FF:000001">
    <property type="entry name" value="Methionine--tRNA ligase"/>
    <property type="match status" value="1"/>
</dbReference>
<dbReference type="FunFam" id="2.40.50.140:FF:000042">
    <property type="entry name" value="Methionine--tRNA ligase"/>
    <property type="match status" value="1"/>
</dbReference>
<dbReference type="Gene3D" id="3.40.50.620">
    <property type="entry name" value="HUPs"/>
    <property type="match status" value="1"/>
</dbReference>
<dbReference type="Gene3D" id="1.10.730.10">
    <property type="entry name" value="Isoleucyl-tRNA Synthetase, Domain 1"/>
    <property type="match status" value="1"/>
</dbReference>
<dbReference type="Gene3D" id="2.20.28.20">
    <property type="entry name" value="Methionyl-tRNA synthetase, Zn-domain"/>
    <property type="match status" value="1"/>
</dbReference>
<dbReference type="Gene3D" id="2.40.50.140">
    <property type="entry name" value="Nucleic acid-binding proteins"/>
    <property type="match status" value="1"/>
</dbReference>
<dbReference type="HAMAP" id="MF_00098">
    <property type="entry name" value="Met_tRNA_synth_type1"/>
    <property type="match status" value="1"/>
</dbReference>
<dbReference type="InterPro" id="IPR001412">
    <property type="entry name" value="aa-tRNA-synth_I_CS"/>
</dbReference>
<dbReference type="InterPro" id="IPR041872">
    <property type="entry name" value="Anticodon_Met"/>
</dbReference>
<dbReference type="InterPro" id="IPR004495">
    <property type="entry name" value="Met-tRNA-synth_bsu_C"/>
</dbReference>
<dbReference type="InterPro" id="IPR023458">
    <property type="entry name" value="Met-tRNA_ligase_1"/>
</dbReference>
<dbReference type="InterPro" id="IPR014758">
    <property type="entry name" value="Met-tRNA_synth"/>
</dbReference>
<dbReference type="InterPro" id="IPR015413">
    <property type="entry name" value="Methionyl/Leucyl_tRNA_Synth"/>
</dbReference>
<dbReference type="InterPro" id="IPR033911">
    <property type="entry name" value="MetRS_core"/>
</dbReference>
<dbReference type="InterPro" id="IPR029038">
    <property type="entry name" value="MetRS_Zn"/>
</dbReference>
<dbReference type="InterPro" id="IPR012340">
    <property type="entry name" value="NA-bd_OB-fold"/>
</dbReference>
<dbReference type="InterPro" id="IPR014729">
    <property type="entry name" value="Rossmann-like_a/b/a_fold"/>
</dbReference>
<dbReference type="InterPro" id="IPR002547">
    <property type="entry name" value="tRNA-bd_dom"/>
</dbReference>
<dbReference type="InterPro" id="IPR009080">
    <property type="entry name" value="tRNAsynth_Ia_anticodon-bd"/>
</dbReference>
<dbReference type="NCBIfam" id="TIGR00398">
    <property type="entry name" value="metG"/>
    <property type="match status" value="1"/>
</dbReference>
<dbReference type="NCBIfam" id="TIGR00399">
    <property type="entry name" value="metG_C_term"/>
    <property type="match status" value="1"/>
</dbReference>
<dbReference type="NCBIfam" id="NF001100">
    <property type="entry name" value="PRK00133.1"/>
    <property type="match status" value="1"/>
</dbReference>
<dbReference type="PANTHER" id="PTHR45765">
    <property type="entry name" value="METHIONINE--TRNA LIGASE"/>
    <property type="match status" value="1"/>
</dbReference>
<dbReference type="PANTHER" id="PTHR45765:SF1">
    <property type="entry name" value="METHIONINE--TRNA LIGASE, CYTOPLASMIC"/>
    <property type="match status" value="1"/>
</dbReference>
<dbReference type="Pfam" id="PF19303">
    <property type="entry name" value="Anticodon_3"/>
    <property type="match status" value="1"/>
</dbReference>
<dbReference type="Pfam" id="PF09334">
    <property type="entry name" value="tRNA-synt_1g"/>
    <property type="match status" value="1"/>
</dbReference>
<dbReference type="Pfam" id="PF01588">
    <property type="entry name" value="tRNA_bind"/>
    <property type="match status" value="1"/>
</dbReference>
<dbReference type="PRINTS" id="PR01041">
    <property type="entry name" value="TRNASYNTHMET"/>
</dbReference>
<dbReference type="SUPFAM" id="SSF47323">
    <property type="entry name" value="Anticodon-binding domain of a subclass of class I aminoacyl-tRNA synthetases"/>
    <property type="match status" value="1"/>
</dbReference>
<dbReference type="SUPFAM" id="SSF57770">
    <property type="entry name" value="Methionyl-tRNA synthetase (MetRS), Zn-domain"/>
    <property type="match status" value="1"/>
</dbReference>
<dbReference type="SUPFAM" id="SSF50249">
    <property type="entry name" value="Nucleic acid-binding proteins"/>
    <property type="match status" value="1"/>
</dbReference>
<dbReference type="SUPFAM" id="SSF52374">
    <property type="entry name" value="Nucleotidylyl transferase"/>
    <property type="match status" value="1"/>
</dbReference>
<dbReference type="PROSITE" id="PS00178">
    <property type="entry name" value="AA_TRNA_LIGASE_I"/>
    <property type="match status" value="1"/>
</dbReference>
<dbReference type="PROSITE" id="PS50886">
    <property type="entry name" value="TRBD"/>
    <property type="match status" value="1"/>
</dbReference>
<comment type="function">
    <text evidence="1">Is required not only for elongation of protein synthesis but also for the initiation of all mRNA translation through initiator tRNA(fMet) aminoacylation.</text>
</comment>
<comment type="catalytic activity">
    <reaction evidence="1">
        <text>tRNA(Met) + L-methionine + ATP = L-methionyl-tRNA(Met) + AMP + diphosphate</text>
        <dbReference type="Rhea" id="RHEA:13481"/>
        <dbReference type="Rhea" id="RHEA-COMP:9667"/>
        <dbReference type="Rhea" id="RHEA-COMP:9698"/>
        <dbReference type="ChEBI" id="CHEBI:30616"/>
        <dbReference type="ChEBI" id="CHEBI:33019"/>
        <dbReference type="ChEBI" id="CHEBI:57844"/>
        <dbReference type="ChEBI" id="CHEBI:78442"/>
        <dbReference type="ChEBI" id="CHEBI:78530"/>
        <dbReference type="ChEBI" id="CHEBI:456215"/>
        <dbReference type="EC" id="6.1.1.10"/>
    </reaction>
</comment>
<comment type="cofactor">
    <cofactor evidence="1">
        <name>Zn(2+)</name>
        <dbReference type="ChEBI" id="CHEBI:29105"/>
    </cofactor>
    <text evidence="1">Binds 1 zinc ion per subunit.</text>
</comment>
<comment type="subunit">
    <text evidence="1">Homodimer.</text>
</comment>
<comment type="subcellular location">
    <subcellularLocation>
        <location evidence="1">Cytoplasm</location>
    </subcellularLocation>
</comment>
<comment type="similarity">
    <text evidence="1">Belongs to the class-I aminoacyl-tRNA synthetase family. MetG type 1 subfamily.</text>
</comment>
<reference key="1">
    <citation type="journal article" date="2006" name="PLoS Biol.">
        <title>The genome of deep-sea vent chemolithoautotroph Thiomicrospira crunogena XCL-2.</title>
        <authorList>
            <person name="Scott K.M."/>
            <person name="Sievert S.M."/>
            <person name="Abril F.N."/>
            <person name="Ball L.A."/>
            <person name="Barrett C.J."/>
            <person name="Blake R.A."/>
            <person name="Boller A.J."/>
            <person name="Chain P.S.G."/>
            <person name="Clark J.A."/>
            <person name="Davis C.R."/>
            <person name="Detter C."/>
            <person name="Do K.F."/>
            <person name="Dobrinski K.P."/>
            <person name="Faza B.I."/>
            <person name="Fitzpatrick K.A."/>
            <person name="Freyermuth S.K."/>
            <person name="Harmer T.L."/>
            <person name="Hauser L.J."/>
            <person name="Huegler M."/>
            <person name="Kerfeld C.A."/>
            <person name="Klotz M.G."/>
            <person name="Kong W.W."/>
            <person name="Land M."/>
            <person name="Lapidus A."/>
            <person name="Larimer F.W."/>
            <person name="Longo D.L."/>
            <person name="Lucas S."/>
            <person name="Malfatti S.A."/>
            <person name="Massey S.E."/>
            <person name="Martin D.D."/>
            <person name="McCuddin Z."/>
            <person name="Meyer F."/>
            <person name="Moore J.L."/>
            <person name="Ocampo L.H. Jr."/>
            <person name="Paul J.H."/>
            <person name="Paulsen I.T."/>
            <person name="Reep D.K."/>
            <person name="Ren Q."/>
            <person name="Ross R.L."/>
            <person name="Sato P.Y."/>
            <person name="Thomas P."/>
            <person name="Tinkham L.E."/>
            <person name="Zeruth G.T."/>
        </authorList>
    </citation>
    <scope>NUCLEOTIDE SEQUENCE [LARGE SCALE GENOMIC DNA]</scope>
    <source>
        <strain>DSM 25203 / XCL-2</strain>
    </source>
</reference>